<evidence type="ECO:0000305" key="1"/>
<gene>
    <name type="primary">galF</name>
</gene>
<keyword id="KW-0972">Capsule biogenesis/degradation</keyword>
<keyword id="KW-0448">Lipopolysaccharide biosynthesis</keyword>
<keyword id="KW-0548">Nucleotidyltransferase</keyword>
<keyword id="KW-0808">Transferase</keyword>
<feature type="chain" id="PRO_0000201348" description="UTP--glucose-1-phosphate uridylyltransferase">
    <location>
        <begin position="1"/>
        <end position="298"/>
    </location>
</feature>
<reference key="1">
    <citation type="journal article" date="1995" name="J. Bacteriol.">
        <title>Genomic organization of the Klebsiella pneumoniae cps region responsible for serotype K2 capsular polysaccharide synthesis in the virulent strain Chedid.</title>
        <authorList>
            <person name="Arakawa Y."/>
            <person name="Wacharotayankun R."/>
            <person name="Nagatsuka T."/>
            <person name="Ito H."/>
            <person name="Kato N."/>
            <person name="Ohta M."/>
        </authorList>
    </citation>
    <scope>NUCLEOTIDE SEQUENCE [GENOMIC DNA]</scope>
    <source>
        <strain>Chedid</strain>
    </source>
</reference>
<organism>
    <name type="scientific">Klebsiella pneumoniae</name>
    <dbReference type="NCBI Taxonomy" id="573"/>
    <lineage>
        <taxon>Bacteria</taxon>
        <taxon>Pseudomonadati</taxon>
        <taxon>Pseudomonadota</taxon>
        <taxon>Gammaproteobacteria</taxon>
        <taxon>Enterobacterales</taxon>
        <taxon>Enterobacteriaceae</taxon>
        <taxon>Klebsiella/Raoultella group</taxon>
        <taxon>Klebsiella</taxon>
        <taxon>Klebsiella pneumoniae complex</taxon>
    </lineage>
</organism>
<dbReference type="EC" id="2.7.7.9"/>
<dbReference type="EMBL" id="D21242">
    <property type="protein sequence ID" value="BAA04772.1"/>
    <property type="molecule type" value="Genomic_DNA"/>
</dbReference>
<dbReference type="PIR" id="A56146">
    <property type="entry name" value="A56146"/>
</dbReference>
<dbReference type="RefSeq" id="WP_001055540.1">
    <property type="nucleotide sequence ID" value="NZ_CABVMA010000025.1"/>
</dbReference>
<dbReference type="SMR" id="Q48447"/>
<dbReference type="UniPathway" id="UPA00215"/>
<dbReference type="UniPathway" id="UPA00934"/>
<dbReference type="GO" id="GO:0030234">
    <property type="term" value="F:enzyme regulator activity"/>
    <property type="evidence" value="ECO:0007669"/>
    <property type="project" value="InterPro"/>
</dbReference>
<dbReference type="GO" id="GO:0003983">
    <property type="term" value="F:UTP:glucose-1-phosphate uridylyltransferase activity"/>
    <property type="evidence" value="ECO:0007669"/>
    <property type="project" value="UniProtKB-EC"/>
</dbReference>
<dbReference type="GO" id="GO:0045227">
    <property type="term" value="P:capsule polysaccharide biosynthetic process"/>
    <property type="evidence" value="ECO:0007669"/>
    <property type="project" value="UniProtKB-UniPathway"/>
</dbReference>
<dbReference type="GO" id="GO:0009103">
    <property type="term" value="P:lipopolysaccharide biosynthetic process"/>
    <property type="evidence" value="ECO:0007669"/>
    <property type="project" value="UniProtKB-KW"/>
</dbReference>
<dbReference type="GO" id="GO:0006011">
    <property type="term" value="P:UDP-alpha-D-glucose metabolic process"/>
    <property type="evidence" value="ECO:0007669"/>
    <property type="project" value="InterPro"/>
</dbReference>
<dbReference type="CDD" id="cd02541">
    <property type="entry name" value="UGPase_prokaryotic"/>
    <property type="match status" value="1"/>
</dbReference>
<dbReference type="FunFam" id="3.90.550.10:FF:000008">
    <property type="entry name" value="UTP--glucose-1-phosphate uridylyltransferase"/>
    <property type="match status" value="1"/>
</dbReference>
<dbReference type="Gene3D" id="3.90.550.10">
    <property type="entry name" value="Spore Coat Polysaccharide Biosynthesis Protein SpsA, Chain A"/>
    <property type="match status" value="1"/>
</dbReference>
<dbReference type="InterPro" id="IPR005774">
    <property type="entry name" value="GalF"/>
</dbReference>
<dbReference type="InterPro" id="IPR005771">
    <property type="entry name" value="GalU_uridylyltTrfase_bac/arc"/>
</dbReference>
<dbReference type="InterPro" id="IPR005835">
    <property type="entry name" value="NTP_transferase_dom"/>
</dbReference>
<dbReference type="InterPro" id="IPR029044">
    <property type="entry name" value="Nucleotide-diphossugar_trans"/>
</dbReference>
<dbReference type="NCBIfam" id="TIGR01105">
    <property type="entry name" value="galF"/>
    <property type="match status" value="1"/>
</dbReference>
<dbReference type="NCBIfam" id="NF007516">
    <property type="entry name" value="PRK10122.1"/>
    <property type="match status" value="1"/>
</dbReference>
<dbReference type="PANTHER" id="PTHR43197">
    <property type="entry name" value="UTP--GLUCOSE-1-PHOSPHATE URIDYLYLTRANSFERASE"/>
    <property type="match status" value="1"/>
</dbReference>
<dbReference type="PANTHER" id="PTHR43197:SF2">
    <property type="entry name" value="UTP--GLUCOSE-1-PHOSPHATE URIDYLYLTRANSFERASE"/>
    <property type="match status" value="1"/>
</dbReference>
<dbReference type="Pfam" id="PF00483">
    <property type="entry name" value="NTP_transferase"/>
    <property type="match status" value="1"/>
</dbReference>
<dbReference type="SUPFAM" id="SSF53448">
    <property type="entry name" value="Nucleotide-diphospho-sugar transferases"/>
    <property type="match status" value="1"/>
</dbReference>
<protein>
    <recommendedName>
        <fullName>UTP--glucose-1-phosphate uridylyltransferase</fullName>
        <ecNumber>2.7.7.9</ecNumber>
    </recommendedName>
    <alternativeName>
        <fullName>Alpha-D-glucosyl-1-phosphate uridylyltransferase</fullName>
    </alternativeName>
    <alternativeName>
        <fullName>UDP-glucose pyrophosphorylase</fullName>
        <shortName>UDPGP</shortName>
    </alternativeName>
    <alternativeName>
        <fullName>Uridine diphosphoglucose pyrophosphorylase</fullName>
    </alternativeName>
</protein>
<proteinExistence type="inferred from homology"/>
<sequence>MNMANLKAVIPVAGLGMHMLPATKAIPKEMLPIVDKPMIQYIVDEIVAAGIKEIVLVTHSSKNAVENHFDTSYELEALLEQRVKRQLLAEVQAICPPGVTIMNVRQAQPLGLGHSILCARPVVGDNPFVVVLPDIILDGGTADPLRYNLAAMIARFNETGRSQVLAKRMPGDLSEYSVIQTKEPMVAEGQVARIVEFIEKPDEPQTLDSDLMAVGRYVLSADIWAELERTEPGAWGRIQLTDAIAELAKKQSVDAMLMTGESYDCGKKMGYMQAFVTYGMRNLKEGAKFRESIKKLLA</sequence>
<comment type="catalytic activity">
    <reaction>
        <text>alpha-D-glucose 1-phosphate + UTP + H(+) = UDP-alpha-D-glucose + diphosphate</text>
        <dbReference type="Rhea" id="RHEA:19889"/>
        <dbReference type="ChEBI" id="CHEBI:15378"/>
        <dbReference type="ChEBI" id="CHEBI:33019"/>
        <dbReference type="ChEBI" id="CHEBI:46398"/>
        <dbReference type="ChEBI" id="CHEBI:58601"/>
        <dbReference type="ChEBI" id="CHEBI:58885"/>
        <dbReference type="EC" id="2.7.7.9"/>
    </reaction>
</comment>
<comment type="pathway">
    <text>Carbohydrate metabolism; nucleotide-sugar metabolism.</text>
</comment>
<comment type="pathway">
    <text>Capsule biogenesis; capsule polysaccharide biosynthesis.</text>
</comment>
<comment type="similarity">
    <text evidence="1">Belongs to the UDPGP type 2 family.</text>
</comment>
<name>GALF_KLEPN</name>
<accession>Q48447</accession>